<proteinExistence type="inferred from homology"/>
<sequence>MSSQKIRIRLKAFDHKTLDQSAEKIVETAKRTGARVSGPIPLPTEKSIYTILRSPHVNKDSREQFEMRTHKRLIDILEPTSKTVDALMRLDLPAGVDIEIKL</sequence>
<dbReference type="EMBL" id="CP001336">
    <property type="protein sequence ID" value="ACL18488.1"/>
    <property type="molecule type" value="Genomic_DNA"/>
</dbReference>
<dbReference type="RefSeq" id="WP_005810163.1">
    <property type="nucleotide sequence ID" value="NC_011830.1"/>
</dbReference>
<dbReference type="SMR" id="B8G1W5"/>
<dbReference type="KEGG" id="dhd:Dhaf_0421"/>
<dbReference type="HOGENOM" id="CLU_122625_1_3_9"/>
<dbReference type="Proteomes" id="UP000007726">
    <property type="component" value="Chromosome"/>
</dbReference>
<dbReference type="GO" id="GO:1990904">
    <property type="term" value="C:ribonucleoprotein complex"/>
    <property type="evidence" value="ECO:0007669"/>
    <property type="project" value="UniProtKB-KW"/>
</dbReference>
<dbReference type="GO" id="GO:0005840">
    <property type="term" value="C:ribosome"/>
    <property type="evidence" value="ECO:0007669"/>
    <property type="project" value="UniProtKB-KW"/>
</dbReference>
<dbReference type="GO" id="GO:0003735">
    <property type="term" value="F:structural constituent of ribosome"/>
    <property type="evidence" value="ECO:0007669"/>
    <property type="project" value="InterPro"/>
</dbReference>
<dbReference type="GO" id="GO:0000049">
    <property type="term" value="F:tRNA binding"/>
    <property type="evidence" value="ECO:0007669"/>
    <property type="project" value="UniProtKB-UniRule"/>
</dbReference>
<dbReference type="GO" id="GO:0006412">
    <property type="term" value="P:translation"/>
    <property type="evidence" value="ECO:0007669"/>
    <property type="project" value="UniProtKB-UniRule"/>
</dbReference>
<dbReference type="FunFam" id="3.30.70.600:FF:000001">
    <property type="entry name" value="30S ribosomal protein S10"/>
    <property type="match status" value="1"/>
</dbReference>
<dbReference type="Gene3D" id="3.30.70.600">
    <property type="entry name" value="Ribosomal protein S10 domain"/>
    <property type="match status" value="1"/>
</dbReference>
<dbReference type="HAMAP" id="MF_00508">
    <property type="entry name" value="Ribosomal_uS10"/>
    <property type="match status" value="1"/>
</dbReference>
<dbReference type="InterPro" id="IPR001848">
    <property type="entry name" value="Ribosomal_uS10"/>
</dbReference>
<dbReference type="InterPro" id="IPR018268">
    <property type="entry name" value="Ribosomal_uS10_CS"/>
</dbReference>
<dbReference type="InterPro" id="IPR027486">
    <property type="entry name" value="Ribosomal_uS10_dom"/>
</dbReference>
<dbReference type="InterPro" id="IPR036838">
    <property type="entry name" value="Ribosomal_uS10_dom_sf"/>
</dbReference>
<dbReference type="NCBIfam" id="NF001861">
    <property type="entry name" value="PRK00596.1"/>
    <property type="match status" value="1"/>
</dbReference>
<dbReference type="NCBIfam" id="TIGR01049">
    <property type="entry name" value="rpsJ_bact"/>
    <property type="match status" value="1"/>
</dbReference>
<dbReference type="PANTHER" id="PTHR11700">
    <property type="entry name" value="30S RIBOSOMAL PROTEIN S10 FAMILY MEMBER"/>
    <property type="match status" value="1"/>
</dbReference>
<dbReference type="Pfam" id="PF00338">
    <property type="entry name" value="Ribosomal_S10"/>
    <property type="match status" value="1"/>
</dbReference>
<dbReference type="PRINTS" id="PR00971">
    <property type="entry name" value="RIBOSOMALS10"/>
</dbReference>
<dbReference type="SMART" id="SM01403">
    <property type="entry name" value="Ribosomal_S10"/>
    <property type="match status" value="1"/>
</dbReference>
<dbReference type="SUPFAM" id="SSF54999">
    <property type="entry name" value="Ribosomal protein S10"/>
    <property type="match status" value="1"/>
</dbReference>
<dbReference type="PROSITE" id="PS00361">
    <property type="entry name" value="RIBOSOMAL_S10"/>
    <property type="match status" value="1"/>
</dbReference>
<keyword id="KW-0687">Ribonucleoprotein</keyword>
<keyword id="KW-0689">Ribosomal protein</keyword>
<reference key="1">
    <citation type="journal article" date="2012" name="BMC Microbiol.">
        <title>Genome sequence of Desulfitobacterium hafniense DCB-2, a Gram-positive anaerobe capable of dehalogenation and metal reduction.</title>
        <authorList>
            <person name="Kim S.H."/>
            <person name="Harzman C."/>
            <person name="Davis J.K."/>
            <person name="Hutcheson R."/>
            <person name="Broderick J.B."/>
            <person name="Marsh T.L."/>
            <person name="Tiedje J.M."/>
        </authorList>
    </citation>
    <scope>NUCLEOTIDE SEQUENCE [LARGE SCALE GENOMIC DNA]</scope>
    <source>
        <strain>DSM 10664 / DCB-2</strain>
    </source>
</reference>
<feature type="chain" id="PRO_1000196305" description="Small ribosomal subunit protein uS10">
    <location>
        <begin position="1"/>
        <end position="102"/>
    </location>
</feature>
<organism>
    <name type="scientific">Desulfitobacterium hafniense (strain DSM 10664 / DCB-2)</name>
    <dbReference type="NCBI Taxonomy" id="272564"/>
    <lineage>
        <taxon>Bacteria</taxon>
        <taxon>Bacillati</taxon>
        <taxon>Bacillota</taxon>
        <taxon>Clostridia</taxon>
        <taxon>Eubacteriales</taxon>
        <taxon>Desulfitobacteriaceae</taxon>
        <taxon>Desulfitobacterium</taxon>
    </lineage>
</organism>
<gene>
    <name evidence="1" type="primary">rpsJ</name>
    <name type="ordered locus">Dhaf_0421</name>
</gene>
<name>RS10_DESHD</name>
<evidence type="ECO:0000255" key="1">
    <source>
        <dbReference type="HAMAP-Rule" id="MF_00508"/>
    </source>
</evidence>
<evidence type="ECO:0000305" key="2"/>
<protein>
    <recommendedName>
        <fullName evidence="1">Small ribosomal subunit protein uS10</fullName>
    </recommendedName>
    <alternativeName>
        <fullName evidence="2">30S ribosomal protein S10</fullName>
    </alternativeName>
</protein>
<accession>B8G1W5</accession>
<comment type="function">
    <text evidence="1">Involved in the binding of tRNA to the ribosomes.</text>
</comment>
<comment type="subunit">
    <text evidence="1">Part of the 30S ribosomal subunit.</text>
</comment>
<comment type="similarity">
    <text evidence="1">Belongs to the universal ribosomal protein uS10 family.</text>
</comment>